<comment type="function">
    <text evidence="1">May act by engaging a cell surface molecule on immature T-cells in the embryonic thymus.</text>
</comment>
<comment type="subcellular location">
    <subcellularLocation>
        <location evidence="6">Membrane</location>
        <topology evidence="6">Multi-pass membrane protein</topology>
    </subcellularLocation>
</comment>
<comment type="alternative products">
    <event type="alternative splicing"/>
    <isoform>
        <id>A7XUY5-1</id>
        <name>1</name>
        <name>A</name>
        <sequence type="displayed"/>
    </isoform>
    <isoform>
        <id>A7XUY5-2</id>
        <name>2</name>
        <name>B</name>
        <sequence type="described" ref="VSP_034883"/>
    </isoform>
    <isoform>
        <id>A7XUY5-3</id>
        <name>3</name>
        <name>C</name>
        <sequence type="described" ref="VSP_034884 VSP_034885"/>
    </isoform>
</comment>
<comment type="tissue specificity">
    <text evidence="4">Expressed in skin and, to a lower extent, testis.</text>
</comment>
<comment type="miscellaneous">
    <text>Encoded by one of the 11 copies of Skint genes clustered in the D1 region of the chromosome 4.</text>
</comment>
<comment type="similarity">
    <text evidence="6">Belongs to the SKINT family.</text>
</comment>
<proteinExistence type="evidence at transcript level"/>
<dbReference type="EMBL" id="EU099301">
    <property type="protein sequence ID" value="ABU87899.1"/>
    <property type="molecule type" value="mRNA"/>
</dbReference>
<dbReference type="EMBL" id="EU099302">
    <property type="protein sequence ID" value="ABU87900.1"/>
    <property type="molecule type" value="mRNA"/>
</dbReference>
<dbReference type="EMBL" id="EU099303">
    <property type="protein sequence ID" value="ABU87901.1"/>
    <property type="molecule type" value="mRNA"/>
</dbReference>
<dbReference type="RefSeq" id="NP_001161348.1">
    <molecule id="A7XUY5-1"/>
    <property type="nucleotide sequence ID" value="NM_001167876.1"/>
</dbReference>
<dbReference type="RefSeq" id="NP_001161350.1">
    <molecule id="A7XUY5-2"/>
    <property type="nucleotide sequence ID" value="NM_001167878.1"/>
</dbReference>
<dbReference type="SMR" id="A7XUY5"/>
<dbReference type="BioGRID" id="232435">
    <property type="interactions" value="2"/>
</dbReference>
<dbReference type="FunCoup" id="A7XUY5">
    <property type="interactions" value="243"/>
</dbReference>
<dbReference type="STRING" id="10090.ENSMUSP00000132470"/>
<dbReference type="GlyCosmos" id="A7XUY5">
    <property type="glycosylation" value="1 site, No reported glycans"/>
</dbReference>
<dbReference type="GlyGen" id="A7XUY5">
    <property type="glycosylation" value="1 site"/>
</dbReference>
<dbReference type="iPTMnet" id="A7XUY5"/>
<dbReference type="PhosphoSitePlus" id="A7XUY5"/>
<dbReference type="PaxDb" id="10090-ENSMUSP00000132470"/>
<dbReference type="GeneID" id="242627"/>
<dbReference type="KEGG" id="mmu:242627"/>
<dbReference type="UCSC" id="uc009vcz.1">
    <molecule id="A7XUY5-1"/>
    <property type="organism name" value="mouse"/>
</dbReference>
<dbReference type="UCSC" id="uc009vda.1">
    <molecule id="A7XUY5-3"/>
    <property type="organism name" value="mouse"/>
</dbReference>
<dbReference type="UCSC" id="uc012diu.1">
    <molecule id="A7XUY5-2"/>
    <property type="organism name" value="mouse"/>
</dbReference>
<dbReference type="AGR" id="MGI:3650151"/>
<dbReference type="CTD" id="242627"/>
<dbReference type="MGI" id="MGI:3650151">
    <property type="gene designation" value="Skint5"/>
</dbReference>
<dbReference type="eggNOG" id="ENOG502SEQH">
    <property type="taxonomic scope" value="Eukaryota"/>
</dbReference>
<dbReference type="InParanoid" id="A7XUY5"/>
<dbReference type="BioGRID-ORCS" id="242627">
    <property type="hits" value="2 hits in 39 CRISPR screens"/>
</dbReference>
<dbReference type="ChiTaRS" id="Skint5">
    <property type="organism name" value="mouse"/>
</dbReference>
<dbReference type="PRO" id="PR:A7XUY5"/>
<dbReference type="Proteomes" id="UP000000589">
    <property type="component" value="Unplaced"/>
</dbReference>
<dbReference type="RNAct" id="A7XUY5">
    <property type="molecule type" value="protein"/>
</dbReference>
<dbReference type="GO" id="GO:0016020">
    <property type="term" value="C:membrane"/>
    <property type="evidence" value="ECO:0007669"/>
    <property type="project" value="UniProtKB-SubCell"/>
</dbReference>
<dbReference type="FunFam" id="2.60.40.10:FF:000088">
    <property type="entry name" value="Butyrophilin subfamily 1 member A1"/>
    <property type="match status" value="1"/>
</dbReference>
<dbReference type="FunFam" id="2.60.40.10:FF:000142">
    <property type="entry name" value="V-set domain-containing T-cell activation inhibitor 1"/>
    <property type="match status" value="1"/>
</dbReference>
<dbReference type="Gene3D" id="2.60.40.10">
    <property type="entry name" value="Immunoglobulins"/>
    <property type="match status" value="2"/>
</dbReference>
<dbReference type="InterPro" id="IPR053896">
    <property type="entry name" value="BTN3A2-like_Ig-C"/>
</dbReference>
<dbReference type="InterPro" id="IPR007110">
    <property type="entry name" value="Ig-like_dom"/>
</dbReference>
<dbReference type="InterPro" id="IPR036179">
    <property type="entry name" value="Ig-like_dom_sf"/>
</dbReference>
<dbReference type="InterPro" id="IPR013783">
    <property type="entry name" value="Ig-like_fold"/>
</dbReference>
<dbReference type="InterPro" id="IPR003599">
    <property type="entry name" value="Ig_sub"/>
</dbReference>
<dbReference type="InterPro" id="IPR013106">
    <property type="entry name" value="Ig_V-set"/>
</dbReference>
<dbReference type="InterPro" id="IPR050504">
    <property type="entry name" value="IgSF_BTN/MOG"/>
</dbReference>
<dbReference type="PANTHER" id="PTHR24100">
    <property type="entry name" value="BUTYROPHILIN"/>
    <property type="match status" value="1"/>
</dbReference>
<dbReference type="PANTHER" id="PTHR24100:SF152">
    <property type="entry name" value="SELECTION AND UPKEEP OF INTRAEPITHELIAL T-CELLS PROTEIN 5-RELATED"/>
    <property type="match status" value="1"/>
</dbReference>
<dbReference type="Pfam" id="PF22705">
    <property type="entry name" value="C2-set_3"/>
    <property type="match status" value="1"/>
</dbReference>
<dbReference type="Pfam" id="PF07686">
    <property type="entry name" value="V-set"/>
    <property type="match status" value="1"/>
</dbReference>
<dbReference type="SMART" id="SM00409">
    <property type="entry name" value="IG"/>
    <property type="match status" value="1"/>
</dbReference>
<dbReference type="SMART" id="SM00406">
    <property type="entry name" value="IGv"/>
    <property type="match status" value="1"/>
</dbReference>
<dbReference type="SUPFAM" id="SSF48726">
    <property type="entry name" value="Immunoglobulin"/>
    <property type="match status" value="2"/>
</dbReference>
<dbReference type="PROSITE" id="PS50835">
    <property type="entry name" value="IG_LIKE"/>
    <property type="match status" value="2"/>
</dbReference>
<evidence type="ECO:0000250" key="1"/>
<evidence type="ECO:0000255" key="2"/>
<evidence type="ECO:0000255" key="3">
    <source>
        <dbReference type="PROSITE-ProRule" id="PRU00114"/>
    </source>
</evidence>
<evidence type="ECO:0000269" key="4">
    <source>
    </source>
</evidence>
<evidence type="ECO:0000303" key="5">
    <source>
    </source>
</evidence>
<evidence type="ECO:0000305" key="6"/>
<sequence>MGAVGIPLTAHCVVLFLLQMVALSSEQFTVNGLESPVLVPLDGNLELSCQLSPPQQAKHMEIRWFKNRYSEPVYLYRNGKDLFGEIVYKYVERTELLKDDIGKGKVTLRIFKVTSVDSGSYHCFFKDGKFYEEHIIDVKVTATSSDIQILMHPPNIKGVRLECHSGGWFPQPHMEWRDSKGEYIPATSKSHSQDENEFFNMTMDLFIKSNSHWSATCYIQNFVTHQEESISIVLPGVWDSWCPAWIMITLLIVIHMTYYIKLYRTYATKEMLLKSIQSSSQSSTVDTEKKEWLLKSIQSRIQSSSVDAEKKEWLLKFIQSSIQSSSVDLEKKEWLLKSIQSSIQSAIVDRGTKEWLLESIQSSILSSIVDQGTKVLLLKSIQSSIQSSTLDIETKELLLKSIQSSIQSSIMDLGTKELLLKIIQSSIQSSSVDLGTKELLLKIIQSSIQSSTVDLGTKELLLKIIQSSIQSSSVDLGTKELLLKIIQSSIQSSTVDLGTKELLLKIIQSSIQSSSVDLGAKMGLLESILSSIQSSNVDLETKVLLLKSIQSSIQSSTVYLGIKQWLLERIESIIQSSSVYLDTKELLLKIIQSSIESYSVDLGNKEFLLKIILSSIQSSSVDLGTKELLVKFFQSNIQSSSVIPGTKKLLVKIIQSSLQSSSVDLGTKKVLLDIIQTSIQNSNVHTERKGLLLKIIQSSVQSSSVDQGTKEMLLEIIQSSIQNSSVNQWTKDLLLKIIQSIIQSSSVDLGTKGFLLKIIQSSIQSSSVDIGTKSMLLKKTGLILKSSIVNPGTELLFQLIESIRHSSSVNSETKKMLSEITQSTVQSSSVNPVTEEMIEEKYQLLLQSSSVNLEAENILNVTTQWILQISSVNQGKEMLLLDKIQQILQISSVNPETKDLLLEKIELILQNPGVHQETKDLLLERIQLILQNSSVQKETKYLLLERIRSILQSSCVQKETKDLLLERIQSLLQSSCVQKETKDLLLEKIQLILQNSTVHQETKDLLLERIQLFLQNSTVDQETSYLLLKRIQLILQSSSVKKETKEFVLYIIESILHSSSVHQETKDLLFDRVQLILESSSVQQGLKCLLLNMIQVIFQRTSVQKEMKDLLFNRIPLILESSSVQQETKDKLLDIIQSILQRTSVQEETKDKLLDIIQSILQRSSVQKDTIDTLLDRIQLILQRTSVQKEMKDFLLDRIKSILESFSVHQETKKLLLNRIMSILESSTVHQETKKLLLERIQSILESSSVQQETKKLLLDRIHSILKSSSVQKETKNLLLDRIHSILKSSSVQKESCNKRNPFWKKYALDLGISVFTIIVVTLIMHLKQREADQHFELNTLWSKDTSVILCVLIMFNNRLKALIYFRLYGFSPPGKAHKYIVNYILRFSHPVFCIVYSATILYMYLQIQNKDSLFSLYNSWMVEMEMVLIFLLVIFNVKNIATVLLYFDSTTLRLFFWIKG</sequence>
<reference key="1">
    <citation type="journal article" date="2008" name="Nat. Genet.">
        <title>Skint1, the prototype of a newly identified immunoglobulin superfamily gene cluster, positively selects epidermal gammadelta T cells.</title>
        <authorList>
            <person name="Boyden L.M."/>
            <person name="Lewis J.M."/>
            <person name="Barbee S.D."/>
            <person name="Bas A."/>
            <person name="Girardi M."/>
            <person name="Hayday A.C."/>
            <person name="Tigelaar R.E."/>
            <person name="Lifton R.P."/>
        </authorList>
    </citation>
    <scope>NUCLEOTIDE SEQUENCE [MRNA] (ISOFORMS 1; 2 AND 3)</scope>
    <scope>TISSUE SPECIFICITY</scope>
    <source>
        <strain>C57BL/6J</strain>
    </source>
</reference>
<accession>A7XUY5</accession>
<accession>A7XUY9</accession>
<accession>A7XUZ2</accession>
<organism>
    <name type="scientific">Mus musculus</name>
    <name type="common">Mouse</name>
    <dbReference type="NCBI Taxonomy" id="10090"/>
    <lineage>
        <taxon>Eukaryota</taxon>
        <taxon>Metazoa</taxon>
        <taxon>Chordata</taxon>
        <taxon>Craniata</taxon>
        <taxon>Vertebrata</taxon>
        <taxon>Euteleostomi</taxon>
        <taxon>Mammalia</taxon>
        <taxon>Eutheria</taxon>
        <taxon>Euarchontoglires</taxon>
        <taxon>Glires</taxon>
        <taxon>Rodentia</taxon>
        <taxon>Myomorpha</taxon>
        <taxon>Muroidea</taxon>
        <taxon>Muridae</taxon>
        <taxon>Murinae</taxon>
        <taxon>Mus</taxon>
        <taxon>Mus</taxon>
    </lineage>
</organism>
<name>SKIT5_MOUSE</name>
<keyword id="KW-0025">Alternative splicing</keyword>
<keyword id="KW-1015">Disulfide bond</keyword>
<keyword id="KW-0325">Glycoprotein</keyword>
<keyword id="KW-0393">Immunoglobulin domain</keyword>
<keyword id="KW-0472">Membrane</keyword>
<keyword id="KW-1185">Reference proteome</keyword>
<keyword id="KW-0677">Repeat</keyword>
<keyword id="KW-0732">Signal</keyword>
<keyword id="KW-0812">Transmembrane</keyword>
<keyword id="KW-1133">Transmembrane helix</keyword>
<gene>
    <name type="primary">Skint5</name>
</gene>
<protein>
    <recommendedName>
        <fullName>Selection and upkeep of intraepithelial T-cells protein 5</fullName>
        <shortName>Skint-5</shortName>
    </recommendedName>
</protein>
<feature type="signal peptide" evidence="2">
    <location>
        <begin position="1"/>
        <end position="24"/>
    </location>
</feature>
<feature type="chain" id="PRO_5000271637" description="Selection and upkeep of intraepithelial T-cells protein 5">
    <location>
        <begin position="25"/>
        <end position="1461"/>
    </location>
</feature>
<feature type="topological domain" description="Extracellular" evidence="2">
    <location>
        <begin position="25"/>
        <end position="1306"/>
    </location>
</feature>
<feature type="transmembrane region" description="Helical" evidence="2">
    <location>
        <begin position="1307"/>
        <end position="1327"/>
    </location>
</feature>
<feature type="topological domain" description="Cytoplasmic" evidence="2">
    <location>
        <begin position="1328"/>
        <end position="1345"/>
    </location>
</feature>
<feature type="transmembrane region" description="Helical" evidence="2">
    <location>
        <begin position="1346"/>
        <end position="1366"/>
    </location>
</feature>
<feature type="topological domain" description="Extracellular" evidence="2">
    <location>
        <begin position="1367"/>
        <end position="1387"/>
    </location>
</feature>
<feature type="transmembrane region" description="Helical" evidence="2">
    <location>
        <begin position="1388"/>
        <end position="1408"/>
    </location>
</feature>
<feature type="topological domain" description="Cytoplasmic" evidence="2">
    <location>
        <begin position="1409"/>
        <end position="1427"/>
    </location>
</feature>
<feature type="transmembrane region" description="Helical" evidence="2">
    <location>
        <begin position="1428"/>
        <end position="1448"/>
    </location>
</feature>
<feature type="topological domain" description="Extracellular" evidence="2">
    <location>
        <begin position="1449"/>
        <end position="1461"/>
    </location>
</feature>
<feature type="domain" description="Ig-like V-type">
    <location>
        <begin position="26"/>
        <end position="139"/>
    </location>
</feature>
<feature type="domain" description="Ig-like C1-type">
    <location>
        <begin position="142"/>
        <end position="231"/>
    </location>
</feature>
<feature type="glycosylation site" description="N-linked (GlcNAc...) asparagine" evidence="2">
    <location>
        <position position="200"/>
    </location>
</feature>
<feature type="disulfide bond" evidence="3">
    <location>
        <begin position="49"/>
        <end position="123"/>
    </location>
</feature>
<feature type="disulfide bond" evidence="3">
    <location>
        <begin position="163"/>
        <end position="217"/>
    </location>
</feature>
<feature type="splice variant" id="VSP_034884" description="In isoform 3." evidence="5">
    <original>VWDSWCPAWIMITLLIVIHMT</original>
    <variation>KMCILSSLTATLTHTCYSIPS</variation>
    <location>
        <begin position="237"/>
        <end position="257"/>
    </location>
</feature>
<feature type="splice variant" id="VSP_034885" description="In isoform 3." evidence="5">
    <location>
        <begin position="258"/>
        <end position="1461"/>
    </location>
</feature>
<feature type="splice variant" id="VSP_034883" description="In isoform 2." evidence="5">
    <location>
        <begin position="1235"/>
        <end position="1255"/>
    </location>
</feature>